<gene>
    <name evidence="6" type="ordered locus">TTHB099</name>
</gene>
<protein>
    <recommendedName>
        <fullName evidence="4 6">Transcriptional regulator LdrP</fullName>
    </recommendedName>
    <alternativeName>
        <fullName evidence="4">Cyclic AMP receptor protein/Fumarate and nitrate reduction regulator superfamily protein LdrP</fullName>
        <shortName evidence="4">CRP/FNR superfamily protein LdrP</shortName>
    </alternativeName>
    <alternativeName>
        <fullName evidence="5">Light induced transcription regulator-dependent regulatory protein</fullName>
    </alternativeName>
    <alternativeName>
        <fullName evidence="5">LitR-dependent regulatory protein</fullName>
        <shortName evidence="5">LdrP</shortName>
    </alternativeName>
</protein>
<name>LDRP_THET8</name>
<sequence length="195" mass="22138">MKRFARKETIYLRGEEARTLYRLEEGLVRVVELLPDGRLITLRHVLPGDYFGEEALEGKAYRYTAEAMTEAVVQGLEPRAMDHEALHRVARNLARQMRRVQAYEAHLQTGELRARIARYLLFLADTPLSARDRQGIYVTVSHEEIADATASIRESVSKVLADLRREGLIATAYRRVYLLDLAALEREAGSALEAA</sequence>
<comment type="function">
    <text evidence="1">Activates transcription. Positively regulates PcrtB promoter upstream of the crtB operon in a cAMP-independent manner. Regulated genes include genes encoding DNA photolyase, phytoene synthase and cytochrome P450 monooxygenase, which are involved in carotenoid biosynthesis. Positively regulates the light-inducible gene cluster in the megaplasmid in a cAMP-independent manner.</text>
</comment>
<comment type="subunit">
    <text evidence="3">Homodimer.</text>
</comment>
<comment type="interaction">
    <interactant intactId="EBI-16208148">
        <id>Q53W63</id>
    </interactant>
    <interactant intactId="EBI-2106870">
        <id>Q5SHR6</id>
        <label>rpoA</label>
    </interactant>
    <organismsDiffer>false</organismsDiffer>
    <experiments>2</experiments>
</comment>
<proteinExistence type="evidence at protein level"/>
<geneLocation type="plasmid" evidence="6 7">
    <name>pTT27</name>
</geneLocation>
<reference evidence="6 7" key="1">
    <citation type="submission" date="2004-11" db="EMBL/GenBank/DDBJ databases">
        <title>Complete genome sequence of Thermus thermophilus HB8.</title>
        <authorList>
            <person name="Masui R."/>
            <person name="Kurokawa K."/>
            <person name="Nakagawa N."/>
            <person name="Tokunaga F."/>
            <person name="Koyama Y."/>
            <person name="Shibata T."/>
            <person name="Oshima T."/>
            <person name="Yokoyama S."/>
            <person name="Yasunaga T."/>
            <person name="Kuramitsu S."/>
        </authorList>
    </citation>
    <scope>NUCLEOTIDE SEQUENCE [LARGE SCALE GENOMIC DNA]</scope>
    <source>
        <strain evidence="7">ATCC 27634 / DSM 579 / HB8</strain>
    </source>
</reference>
<reference evidence="8" key="2">
    <citation type="journal article" date="2012" name="Proteins">
        <title>X-ray crystal structure of TTHB099, a CRP/FNR superfamily transcriptional regulator from Thermus thermophilus HB8, reveals a DNA-binding protein with no required allosteric effector molecule.</title>
        <authorList>
            <person name="Agari Y."/>
            <person name="Kuramitsu S."/>
            <person name="Shinkai A."/>
        </authorList>
    </citation>
    <scope>X-RAY CRYSTALLOGRAPHY (1.92 ANGSTROMS)</scope>
    <scope>SUBUNIT</scope>
    <source>
        <strain evidence="4">ATCC 27634 / DSM 579 / HB8</strain>
    </source>
</reference>
<organism evidence="6">
    <name type="scientific">Thermus thermophilus (strain ATCC 27634 / DSM 579 / HB8)</name>
    <dbReference type="NCBI Taxonomy" id="300852"/>
    <lineage>
        <taxon>Bacteria</taxon>
        <taxon>Thermotogati</taxon>
        <taxon>Deinococcota</taxon>
        <taxon>Deinococci</taxon>
        <taxon>Thermales</taxon>
        <taxon>Thermaceae</taxon>
        <taxon>Thermus</taxon>
    </lineage>
</organism>
<feature type="chain" id="PRO_0000436261" description="Transcriptional regulator LdrP">
    <location>
        <begin position="1"/>
        <end position="195"/>
    </location>
</feature>
<feature type="domain" description="HTH crp-type" evidence="2">
    <location>
        <begin position="110"/>
        <end position="182"/>
    </location>
</feature>
<feature type="DNA-binding region" description="H-T-H motif" evidence="2">
    <location>
        <begin position="142"/>
        <end position="161"/>
    </location>
</feature>
<feature type="strand" evidence="9">
    <location>
        <begin position="2"/>
        <end position="4"/>
    </location>
</feature>
<feature type="strand" evidence="9">
    <location>
        <begin position="9"/>
        <end position="11"/>
    </location>
</feature>
<feature type="strand" evidence="9">
    <location>
        <begin position="20"/>
        <end position="26"/>
    </location>
</feature>
<feature type="strand" evidence="9">
    <location>
        <begin position="28"/>
        <end position="33"/>
    </location>
</feature>
<feature type="strand" evidence="9">
    <location>
        <begin position="39"/>
        <end position="45"/>
    </location>
</feature>
<feature type="helix" evidence="9">
    <location>
        <begin position="53"/>
        <end position="56"/>
    </location>
</feature>
<feature type="strand" evidence="9">
    <location>
        <begin position="62"/>
        <end position="76"/>
    </location>
</feature>
<feature type="helix" evidence="9">
    <location>
        <begin position="78"/>
        <end position="80"/>
    </location>
</feature>
<feature type="helix" evidence="9">
    <location>
        <begin position="83"/>
        <end position="107"/>
    </location>
</feature>
<feature type="helix" evidence="9">
    <location>
        <begin position="112"/>
        <end position="123"/>
    </location>
</feature>
<feature type="strand" evidence="9">
    <location>
        <begin position="129"/>
        <end position="132"/>
    </location>
</feature>
<feature type="strand" evidence="9">
    <location>
        <begin position="135"/>
        <end position="139"/>
    </location>
</feature>
<feature type="helix" evidence="9">
    <location>
        <begin position="142"/>
        <end position="147"/>
    </location>
</feature>
<feature type="turn" evidence="9">
    <location>
        <begin position="148"/>
        <end position="150"/>
    </location>
</feature>
<feature type="helix" evidence="9">
    <location>
        <begin position="153"/>
        <end position="165"/>
    </location>
</feature>
<feature type="strand" evidence="9">
    <location>
        <begin position="168"/>
        <end position="172"/>
    </location>
</feature>
<feature type="strand" evidence="9">
    <location>
        <begin position="175"/>
        <end position="178"/>
    </location>
</feature>
<feature type="helix" evidence="9">
    <location>
        <begin position="181"/>
        <end position="188"/>
    </location>
</feature>
<keyword id="KW-0002">3D-structure</keyword>
<keyword id="KW-0238">DNA-binding</keyword>
<keyword id="KW-0614">Plasmid</keyword>
<keyword id="KW-1185">Reference proteome</keyword>
<keyword id="KW-0804">Transcription</keyword>
<keyword id="KW-0805">Transcription regulation</keyword>
<evidence type="ECO:0000250" key="1">
    <source>
        <dbReference type="UniProtKB" id="Q746J8"/>
    </source>
</evidence>
<evidence type="ECO:0000255" key="2">
    <source>
        <dbReference type="PROSITE-ProRule" id="PRU00387"/>
    </source>
</evidence>
<evidence type="ECO:0000269" key="3">
    <source>
    </source>
</evidence>
<evidence type="ECO:0000303" key="4">
    <source>
    </source>
</evidence>
<evidence type="ECO:0000305" key="5"/>
<evidence type="ECO:0000312" key="6">
    <source>
        <dbReference type="EMBL" id="BAD71895.1"/>
    </source>
</evidence>
<evidence type="ECO:0000312" key="7">
    <source>
        <dbReference type="Proteomes" id="UP000000532"/>
    </source>
</evidence>
<evidence type="ECO:0007744" key="8">
    <source>
        <dbReference type="PDB" id="3B02"/>
    </source>
</evidence>
<evidence type="ECO:0007829" key="9">
    <source>
        <dbReference type="PDB" id="3B02"/>
    </source>
</evidence>
<accession>Q53W63</accession>
<dbReference type="EMBL" id="AP008227">
    <property type="protein sequence ID" value="BAD71895.1"/>
    <property type="molecule type" value="Genomic_DNA"/>
</dbReference>
<dbReference type="RefSeq" id="YP_145338.1">
    <property type="nucleotide sequence ID" value="NC_006462.1"/>
</dbReference>
<dbReference type="PDB" id="3B02">
    <property type="method" value="X-ray"/>
    <property type="resolution" value="1.92 A"/>
    <property type="chains" value="A=1-195"/>
</dbReference>
<dbReference type="PDB" id="5I2D">
    <property type="method" value="X-ray"/>
    <property type="resolution" value="4.41 A"/>
    <property type="chains" value="G/H/R/S=1-195"/>
</dbReference>
<dbReference type="PDBsum" id="3B02"/>
<dbReference type="PDBsum" id="5I2D"/>
<dbReference type="SMR" id="Q53W63"/>
<dbReference type="DIP" id="DIP-62042N"/>
<dbReference type="IntAct" id="Q53W63">
    <property type="interactions" value="5"/>
</dbReference>
<dbReference type="EnsemblBacteria" id="BAD71895">
    <property type="protein sequence ID" value="BAD71895"/>
    <property type="gene ID" value="BAD71895"/>
</dbReference>
<dbReference type="GeneID" id="3169578"/>
<dbReference type="KEGG" id="ttj:TTHB099"/>
<dbReference type="PATRIC" id="fig|300852.9.peg.2042"/>
<dbReference type="HOGENOM" id="CLU_075053_3_1_0"/>
<dbReference type="PhylomeDB" id="Q53W63"/>
<dbReference type="EvolutionaryTrace" id="Q53W63"/>
<dbReference type="Proteomes" id="UP000000532">
    <property type="component" value="Plasmid pTT27"/>
</dbReference>
<dbReference type="GO" id="GO:0005829">
    <property type="term" value="C:cytosol"/>
    <property type="evidence" value="ECO:0007669"/>
    <property type="project" value="TreeGrafter"/>
</dbReference>
<dbReference type="GO" id="GO:0003677">
    <property type="term" value="F:DNA binding"/>
    <property type="evidence" value="ECO:0000250"/>
    <property type="project" value="UniProtKB"/>
</dbReference>
<dbReference type="GO" id="GO:0003700">
    <property type="term" value="F:DNA-binding transcription factor activity"/>
    <property type="evidence" value="ECO:0000250"/>
    <property type="project" value="UniProtKB"/>
</dbReference>
<dbReference type="GO" id="GO:0042803">
    <property type="term" value="F:protein homodimerization activity"/>
    <property type="evidence" value="ECO:0000314"/>
    <property type="project" value="UniProtKB"/>
</dbReference>
<dbReference type="CDD" id="cd00038">
    <property type="entry name" value="CAP_ED"/>
    <property type="match status" value="1"/>
</dbReference>
<dbReference type="FunFam" id="1.10.10.10:FF:000019">
    <property type="entry name" value="Crp/Fnr family transcriptional regulator"/>
    <property type="match status" value="1"/>
</dbReference>
<dbReference type="Gene3D" id="2.60.120.10">
    <property type="entry name" value="Jelly Rolls"/>
    <property type="match status" value="1"/>
</dbReference>
<dbReference type="Gene3D" id="1.10.10.10">
    <property type="entry name" value="Winged helix-like DNA-binding domain superfamily/Winged helix DNA-binding domain"/>
    <property type="match status" value="1"/>
</dbReference>
<dbReference type="InterPro" id="IPR000595">
    <property type="entry name" value="cNMP-bd_dom"/>
</dbReference>
<dbReference type="InterPro" id="IPR018490">
    <property type="entry name" value="cNMP-bd_dom_sf"/>
</dbReference>
<dbReference type="InterPro" id="IPR050397">
    <property type="entry name" value="Env_Response_Regulators"/>
</dbReference>
<dbReference type="InterPro" id="IPR012318">
    <property type="entry name" value="HTH_CRP"/>
</dbReference>
<dbReference type="InterPro" id="IPR014710">
    <property type="entry name" value="RmlC-like_jellyroll"/>
</dbReference>
<dbReference type="InterPro" id="IPR036388">
    <property type="entry name" value="WH-like_DNA-bd_sf"/>
</dbReference>
<dbReference type="InterPro" id="IPR036390">
    <property type="entry name" value="WH_DNA-bd_sf"/>
</dbReference>
<dbReference type="PANTHER" id="PTHR24567">
    <property type="entry name" value="CRP FAMILY TRANSCRIPTIONAL REGULATORY PROTEIN"/>
    <property type="match status" value="1"/>
</dbReference>
<dbReference type="PANTHER" id="PTHR24567:SF74">
    <property type="entry name" value="HTH-TYPE TRANSCRIPTIONAL REGULATOR ARCR"/>
    <property type="match status" value="1"/>
</dbReference>
<dbReference type="Pfam" id="PF00027">
    <property type="entry name" value="cNMP_binding"/>
    <property type="match status" value="1"/>
</dbReference>
<dbReference type="Pfam" id="PF13545">
    <property type="entry name" value="HTH_Crp_2"/>
    <property type="match status" value="1"/>
</dbReference>
<dbReference type="SMART" id="SM00100">
    <property type="entry name" value="cNMP"/>
    <property type="match status" value="1"/>
</dbReference>
<dbReference type="SMART" id="SM00419">
    <property type="entry name" value="HTH_CRP"/>
    <property type="match status" value="1"/>
</dbReference>
<dbReference type="SUPFAM" id="SSF51206">
    <property type="entry name" value="cAMP-binding domain-like"/>
    <property type="match status" value="1"/>
</dbReference>
<dbReference type="SUPFAM" id="SSF46785">
    <property type="entry name" value="Winged helix' DNA-binding domain"/>
    <property type="match status" value="1"/>
</dbReference>
<dbReference type="PROSITE" id="PS50042">
    <property type="entry name" value="CNMP_BINDING_3"/>
    <property type="match status" value="1"/>
</dbReference>
<dbReference type="PROSITE" id="PS51063">
    <property type="entry name" value="HTH_CRP_2"/>
    <property type="match status" value="1"/>
</dbReference>